<keyword id="KW-0963">Cytoplasm</keyword>
<keyword id="KW-0489">Methyltransferase</keyword>
<keyword id="KW-1185">Reference proteome</keyword>
<keyword id="KW-0694">RNA-binding</keyword>
<keyword id="KW-0698">rRNA processing</keyword>
<keyword id="KW-0949">S-adenosyl-L-methionine</keyword>
<keyword id="KW-0808">Transferase</keyword>
<organism>
    <name type="scientific">Shouchella clausii (strain KSM-K16)</name>
    <name type="common">Alkalihalobacillus clausii</name>
    <dbReference type="NCBI Taxonomy" id="66692"/>
    <lineage>
        <taxon>Bacteria</taxon>
        <taxon>Bacillati</taxon>
        <taxon>Bacillota</taxon>
        <taxon>Bacilli</taxon>
        <taxon>Bacillales</taxon>
        <taxon>Bacillaceae</taxon>
        <taxon>Shouchella</taxon>
    </lineage>
</organism>
<gene>
    <name evidence="1" type="primary">rsmA</name>
    <name evidence="1" type="synonym">ksgA</name>
    <name type="ordered locus">ABC0070</name>
</gene>
<evidence type="ECO:0000255" key="1">
    <source>
        <dbReference type="HAMAP-Rule" id="MF_00607"/>
    </source>
</evidence>
<protein>
    <recommendedName>
        <fullName evidence="1">Ribosomal RNA small subunit methyltransferase A</fullName>
        <ecNumber evidence="1">2.1.1.182</ecNumber>
    </recommendedName>
    <alternativeName>
        <fullName evidence="1">16S rRNA (adenine(1518)-N(6)/adenine(1519)-N(6))-dimethyltransferase</fullName>
    </alternativeName>
    <alternativeName>
        <fullName evidence="1">16S rRNA dimethyladenosine transferase</fullName>
    </alternativeName>
    <alternativeName>
        <fullName evidence="1">16S rRNA dimethylase</fullName>
    </alternativeName>
    <alternativeName>
        <fullName evidence="1">S-adenosylmethionine-6-N', N'-adenosyl(rRNA) dimethyltransferase</fullName>
    </alternativeName>
</protein>
<reference key="1">
    <citation type="submission" date="2003-10" db="EMBL/GenBank/DDBJ databases">
        <title>The complete genome sequence of the alkaliphilic Bacillus clausii KSM-K16.</title>
        <authorList>
            <person name="Takaki Y."/>
            <person name="Kageyama Y."/>
            <person name="Shimamura S."/>
            <person name="Suzuki H."/>
            <person name="Nishi S."/>
            <person name="Hatada Y."/>
            <person name="Kawai S."/>
            <person name="Ito S."/>
            <person name="Horikoshi K."/>
        </authorList>
    </citation>
    <scope>NUCLEOTIDE SEQUENCE [LARGE SCALE GENOMIC DNA]</scope>
    <source>
        <strain>KSM-K16</strain>
    </source>
</reference>
<proteinExistence type="inferred from homology"/>
<feature type="chain" id="PRO_0000101484" description="Ribosomal RNA small subunit methyltransferase A">
    <location>
        <begin position="1"/>
        <end position="296"/>
    </location>
</feature>
<feature type="binding site" evidence="1">
    <location>
        <position position="31"/>
    </location>
    <ligand>
        <name>S-adenosyl-L-methionine</name>
        <dbReference type="ChEBI" id="CHEBI:59789"/>
    </ligand>
</feature>
<feature type="binding site" evidence="1">
    <location>
        <position position="33"/>
    </location>
    <ligand>
        <name>S-adenosyl-L-methionine</name>
        <dbReference type="ChEBI" id="CHEBI:59789"/>
    </ligand>
</feature>
<feature type="binding site" evidence="1">
    <location>
        <position position="58"/>
    </location>
    <ligand>
        <name>S-adenosyl-L-methionine</name>
        <dbReference type="ChEBI" id="CHEBI:59789"/>
    </ligand>
</feature>
<feature type="binding site" evidence="1">
    <location>
        <position position="79"/>
    </location>
    <ligand>
        <name>S-adenosyl-L-methionine</name>
        <dbReference type="ChEBI" id="CHEBI:59789"/>
    </ligand>
</feature>
<feature type="binding site" evidence="1">
    <location>
        <position position="104"/>
    </location>
    <ligand>
        <name>S-adenosyl-L-methionine</name>
        <dbReference type="ChEBI" id="CHEBI:59789"/>
    </ligand>
</feature>
<feature type="binding site" evidence="1">
    <location>
        <position position="129"/>
    </location>
    <ligand>
        <name>S-adenosyl-L-methionine</name>
        <dbReference type="ChEBI" id="CHEBI:59789"/>
    </ligand>
</feature>
<dbReference type="EC" id="2.1.1.182" evidence="1"/>
<dbReference type="EMBL" id="AP006627">
    <property type="protein sequence ID" value="BAD62613.1"/>
    <property type="molecule type" value="Genomic_DNA"/>
</dbReference>
<dbReference type="SMR" id="Q5WLW2"/>
<dbReference type="STRING" id="66692.ABC0070"/>
<dbReference type="KEGG" id="bcl:ABC0070"/>
<dbReference type="eggNOG" id="COG0030">
    <property type="taxonomic scope" value="Bacteria"/>
</dbReference>
<dbReference type="HOGENOM" id="CLU_041220_0_0_9"/>
<dbReference type="OrthoDB" id="9814755at2"/>
<dbReference type="Proteomes" id="UP000001168">
    <property type="component" value="Chromosome"/>
</dbReference>
<dbReference type="GO" id="GO:0005829">
    <property type="term" value="C:cytosol"/>
    <property type="evidence" value="ECO:0007669"/>
    <property type="project" value="TreeGrafter"/>
</dbReference>
<dbReference type="GO" id="GO:0052908">
    <property type="term" value="F:16S rRNA (adenine(1518)-N(6)/adenine(1519)-N(6))-dimethyltransferase activity"/>
    <property type="evidence" value="ECO:0007669"/>
    <property type="project" value="UniProtKB-EC"/>
</dbReference>
<dbReference type="GO" id="GO:0003723">
    <property type="term" value="F:RNA binding"/>
    <property type="evidence" value="ECO:0007669"/>
    <property type="project" value="UniProtKB-KW"/>
</dbReference>
<dbReference type="CDD" id="cd02440">
    <property type="entry name" value="AdoMet_MTases"/>
    <property type="match status" value="1"/>
</dbReference>
<dbReference type="FunFam" id="3.40.50.150:FF:000023">
    <property type="entry name" value="Ribosomal RNA small subunit methyltransferase A"/>
    <property type="match status" value="1"/>
</dbReference>
<dbReference type="Gene3D" id="1.10.8.100">
    <property type="entry name" value="Ribosomal RNA adenine dimethylase-like, domain 2"/>
    <property type="match status" value="1"/>
</dbReference>
<dbReference type="Gene3D" id="3.40.50.150">
    <property type="entry name" value="Vaccinia Virus protein VP39"/>
    <property type="match status" value="1"/>
</dbReference>
<dbReference type="HAMAP" id="MF_00607">
    <property type="entry name" value="16SrRNA_methyltr_A"/>
    <property type="match status" value="1"/>
</dbReference>
<dbReference type="InterPro" id="IPR001737">
    <property type="entry name" value="KsgA/Erm"/>
</dbReference>
<dbReference type="InterPro" id="IPR023165">
    <property type="entry name" value="rRNA_Ade_diMease-like_C"/>
</dbReference>
<dbReference type="InterPro" id="IPR020596">
    <property type="entry name" value="rRNA_Ade_Mease_Trfase_CS"/>
</dbReference>
<dbReference type="InterPro" id="IPR020598">
    <property type="entry name" value="rRNA_Ade_methylase_Trfase_N"/>
</dbReference>
<dbReference type="InterPro" id="IPR011530">
    <property type="entry name" value="rRNA_adenine_dimethylase"/>
</dbReference>
<dbReference type="InterPro" id="IPR029063">
    <property type="entry name" value="SAM-dependent_MTases_sf"/>
</dbReference>
<dbReference type="NCBIfam" id="TIGR00755">
    <property type="entry name" value="ksgA"/>
    <property type="match status" value="1"/>
</dbReference>
<dbReference type="PANTHER" id="PTHR11727">
    <property type="entry name" value="DIMETHYLADENOSINE TRANSFERASE"/>
    <property type="match status" value="1"/>
</dbReference>
<dbReference type="PANTHER" id="PTHR11727:SF7">
    <property type="entry name" value="DIMETHYLADENOSINE TRANSFERASE-RELATED"/>
    <property type="match status" value="1"/>
</dbReference>
<dbReference type="Pfam" id="PF00398">
    <property type="entry name" value="RrnaAD"/>
    <property type="match status" value="1"/>
</dbReference>
<dbReference type="SMART" id="SM00650">
    <property type="entry name" value="rADc"/>
    <property type="match status" value="1"/>
</dbReference>
<dbReference type="SUPFAM" id="SSF53335">
    <property type="entry name" value="S-adenosyl-L-methionine-dependent methyltransferases"/>
    <property type="match status" value="1"/>
</dbReference>
<dbReference type="PROSITE" id="PS01131">
    <property type="entry name" value="RRNA_A_DIMETH"/>
    <property type="match status" value="1"/>
</dbReference>
<dbReference type="PROSITE" id="PS51689">
    <property type="entry name" value="SAM_RNA_A_N6_MT"/>
    <property type="match status" value="1"/>
</dbReference>
<name>RSMA_SHOC1</name>
<sequence>MNLNKDIATPARTNAILKKHGFTLKKSLGQNFLIDLNILAKIVEASGFDEQDGIVEIGPGIGALTEQLAKKADKVVAFEIDGRLIPVLEDTLSAYPNVKIIHSDVLKADLPGVLDAEFSKGQAIHVVANLPYYVTTPILMKLLEDRLPFKSITVMIQAEVAERIAAKPGSKEYGALSIAAQYYAEAKPMVVVPASVFVPQPRVDSSVLKLTIREKPLVEVIDERWFFNVFHASFANRRKTILNNLVHNLAGKDAKAAIEQALSEAGIDPKRRGETLSPQEFARLSDALYSTLRKAD</sequence>
<accession>Q5WLW2</accession>
<comment type="function">
    <text evidence="1">Specifically dimethylates two adjacent adenosines (A1518 and A1519) in the loop of a conserved hairpin near the 3'-end of 16S rRNA in the 30S particle. May play a critical role in biogenesis of 30S subunits.</text>
</comment>
<comment type="catalytic activity">
    <reaction evidence="1">
        <text>adenosine(1518)/adenosine(1519) in 16S rRNA + 4 S-adenosyl-L-methionine = N(6)-dimethyladenosine(1518)/N(6)-dimethyladenosine(1519) in 16S rRNA + 4 S-adenosyl-L-homocysteine + 4 H(+)</text>
        <dbReference type="Rhea" id="RHEA:19609"/>
        <dbReference type="Rhea" id="RHEA-COMP:10232"/>
        <dbReference type="Rhea" id="RHEA-COMP:10233"/>
        <dbReference type="ChEBI" id="CHEBI:15378"/>
        <dbReference type="ChEBI" id="CHEBI:57856"/>
        <dbReference type="ChEBI" id="CHEBI:59789"/>
        <dbReference type="ChEBI" id="CHEBI:74411"/>
        <dbReference type="ChEBI" id="CHEBI:74493"/>
        <dbReference type="EC" id="2.1.1.182"/>
    </reaction>
</comment>
<comment type="subcellular location">
    <subcellularLocation>
        <location evidence="1">Cytoplasm</location>
    </subcellularLocation>
</comment>
<comment type="similarity">
    <text evidence="1">Belongs to the class I-like SAM-binding methyltransferase superfamily. rRNA adenine N(6)-methyltransferase family. RsmA subfamily.</text>
</comment>